<comment type="function">
    <text evidence="1">Probable cell adhesion protein involved in leukocyte transmigration across the blood-brain barrier. Does not express any beta-galactosyltransferase activity in vitro.</text>
</comment>
<comment type="subcellular location">
    <subcellularLocation>
        <location evidence="3">Endoplasmic reticulum lumen</location>
    </subcellularLocation>
</comment>
<comment type="similarity">
    <text evidence="5">Belongs to the glycosyltransferase 25 family.</text>
</comment>
<gene>
    <name type="primary">Cercam</name>
    <name type="synonym">Ceecam1</name>
    <name type="synonym">Glt25d3</name>
</gene>
<organism>
    <name type="scientific">Mus musculus</name>
    <name type="common">Mouse</name>
    <dbReference type="NCBI Taxonomy" id="10090"/>
    <lineage>
        <taxon>Eukaryota</taxon>
        <taxon>Metazoa</taxon>
        <taxon>Chordata</taxon>
        <taxon>Craniata</taxon>
        <taxon>Vertebrata</taxon>
        <taxon>Euteleostomi</taxon>
        <taxon>Mammalia</taxon>
        <taxon>Eutheria</taxon>
        <taxon>Euarchontoglires</taxon>
        <taxon>Glires</taxon>
        <taxon>Rodentia</taxon>
        <taxon>Myomorpha</taxon>
        <taxon>Muroidea</taxon>
        <taxon>Muridae</taxon>
        <taxon>Murinae</taxon>
        <taxon>Mus</taxon>
        <taxon>Mus</taxon>
    </lineage>
</organism>
<evidence type="ECO:0000250" key="1">
    <source>
        <dbReference type="UniProtKB" id="Q5T4B2"/>
    </source>
</evidence>
<evidence type="ECO:0000255" key="2"/>
<evidence type="ECO:0000255" key="3">
    <source>
        <dbReference type="PROSITE-ProRule" id="PRU10138"/>
    </source>
</evidence>
<evidence type="ECO:0000256" key="4">
    <source>
        <dbReference type="SAM" id="MobiDB-lite"/>
    </source>
</evidence>
<evidence type="ECO:0000305" key="5"/>
<name>GT253_MOUSE</name>
<accession>A3KGW5</accession>
<protein>
    <recommendedName>
        <fullName>Inactive glycosyltransferase 25 family member 3</fullName>
    </recommendedName>
    <alternativeName>
        <fullName>Cerebral endothelial cell adhesion molecule</fullName>
    </alternativeName>
</protein>
<dbReference type="EMBL" id="AL928926">
    <property type="status" value="NOT_ANNOTATED_CDS"/>
    <property type="molecule type" value="Genomic_DNA"/>
</dbReference>
<dbReference type="CCDS" id="CCDS15860.1"/>
<dbReference type="RefSeq" id="NP_997181.1">
    <property type="nucleotide sequence ID" value="NM_207298.2"/>
</dbReference>
<dbReference type="SMR" id="A3KGW5"/>
<dbReference type="BioGRID" id="221195">
    <property type="interactions" value="4"/>
</dbReference>
<dbReference type="FunCoup" id="A3KGW5">
    <property type="interactions" value="39"/>
</dbReference>
<dbReference type="STRING" id="10090.ENSMUSP00000041622"/>
<dbReference type="CAZy" id="GT25">
    <property type="family name" value="Glycosyltransferase Family 25"/>
</dbReference>
<dbReference type="GlyCosmos" id="A3KGW5">
    <property type="glycosylation" value="4 sites, No reported glycans"/>
</dbReference>
<dbReference type="GlyGen" id="A3KGW5">
    <property type="glycosylation" value="4 sites, 1 N-linked glycan (2 sites)"/>
</dbReference>
<dbReference type="iPTMnet" id="A3KGW5"/>
<dbReference type="PhosphoSitePlus" id="A3KGW5"/>
<dbReference type="PaxDb" id="10090-ENSMUSP00000041622"/>
<dbReference type="PeptideAtlas" id="A3KGW5"/>
<dbReference type="ProteomicsDB" id="271111"/>
<dbReference type="Antibodypedia" id="17470">
    <property type="antibodies" value="109 antibodies from 22 providers"/>
</dbReference>
<dbReference type="DNASU" id="99151"/>
<dbReference type="Ensembl" id="ENSMUST00000047521.7">
    <property type="protein sequence ID" value="ENSMUSP00000041622.7"/>
    <property type="gene ID" value="ENSMUSG00000039787.14"/>
</dbReference>
<dbReference type="GeneID" id="99151"/>
<dbReference type="KEGG" id="mmu:99151"/>
<dbReference type="UCSC" id="uc008jai.1">
    <property type="organism name" value="mouse"/>
</dbReference>
<dbReference type="AGR" id="MGI:2139134"/>
<dbReference type="CTD" id="51148"/>
<dbReference type="MGI" id="MGI:2139134">
    <property type="gene designation" value="Cercam"/>
</dbReference>
<dbReference type="VEuPathDB" id="HostDB:ENSMUSG00000039787"/>
<dbReference type="eggNOG" id="KOG4179">
    <property type="taxonomic scope" value="Eukaryota"/>
</dbReference>
<dbReference type="GeneTree" id="ENSGT01030000234558"/>
<dbReference type="HOGENOM" id="CLU_024037_2_0_1"/>
<dbReference type="InParanoid" id="A3KGW5"/>
<dbReference type="OMA" id="VEVHVCN"/>
<dbReference type="OrthoDB" id="47375at2759"/>
<dbReference type="PhylomeDB" id="A3KGW5"/>
<dbReference type="TreeFam" id="TF313826"/>
<dbReference type="BioGRID-ORCS" id="99151">
    <property type="hits" value="2 hits in 78 CRISPR screens"/>
</dbReference>
<dbReference type="ChiTaRS" id="Cercam">
    <property type="organism name" value="mouse"/>
</dbReference>
<dbReference type="PRO" id="PR:A3KGW5"/>
<dbReference type="Proteomes" id="UP000000589">
    <property type="component" value="Chromosome 2"/>
</dbReference>
<dbReference type="RNAct" id="A3KGW5">
    <property type="molecule type" value="protein"/>
</dbReference>
<dbReference type="Bgee" id="ENSMUSG00000039787">
    <property type="expression patterns" value="Expressed in ascending aorta and 157 other cell types or tissues"/>
</dbReference>
<dbReference type="ExpressionAtlas" id="A3KGW5">
    <property type="expression patterns" value="baseline and differential"/>
</dbReference>
<dbReference type="GO" id="GO:0005788">
    <property type="term" value="C:endoplasmic reticulum lumen"/>
    <property type="evidence" value="ECO:0007669"/>
    <property type="project" value="UniProtKB-SubCell"/>
</dbReference>
<dbReference type="GO" id="GO:0042802">
    <property type="term" value="F:identical protein binding"/>
    <property type="evidence" value="ECO:0007669"/>
    <property type="project" value="Ensembl"/>
</dbReference>
<dbReference type="GO" id="GO:0007155">
    <property type="term" value="P:cell adhesion"/>
    <property type="evidence" value="ECO:0000266"/>
    <property type="project" value="MGI"/>
</dbReference>
<dbReference type="CDD" id="cd00761">
    <property type="entry name" value="Glyco_tranf_GTA_type"/>
    <property type="match status" value="1"/>
</dbReference>
<dbReference type="CDD" id="cd06532">
    <property type="entry name" value="Glyco_transf_25"/>
    <property type="match status" value="1"/>
</dbReference>
<dbReference type="FunFam" id="3.90.550.10:FF:000048">
    <property type="entry name" value="Glycosyltransferase 25 family member 1"/>
    <property type="match status" value="1"/>
</dbReference>
<dbReference type="Gene3D" id="3.90.550.10">
    <property type="entry name" value="Spore Coat Polysaccharide Biosynthesis Protein SpsA, Chain A"/>
    <property type="match status" value="1"/>
</dbReference>
<dbReference type="InterPro" id="IPR050757">
    <property type="entry name" value="Collagen_mod_GT25"/>
</dbReference>
<dbReference type="InterPro" id="IPR002654">
    <property type="entry name" value="Glyco_trans_25"/>
</dbReference>
<dbReference type="InterPro" id="IPR029044">
    <property type="entry name" value="Nucleotide-diphossugar_trans"/>
</dbReference>
<dbReference type="PANTHER" id="PTHR10730:SF9">
    <property type="entry name" value="INACTIVE GLYCOSYLTRANSFERASE 25 FAMILY MEMBER 3"/>
    <property type="match status" value="1"/>
</dbReference>
<dbReference type="PANTHER" id="PTHR10730">
    <property type="entry name" value="PROCOLLAGEN-LYSINE,2-OXOGLUTARATE 5-DIOXYGENASE/GLYCOSYLTRANSFERASE 25 FAMILY MEMBER"/>
    <property type="match status" value="1"/>
</dbReference>
<dbReference type="Pfam" id="PF01755">
    <property type="entry name" value="Glyco_transf_25"/>
    <property type="match status" value="1"/>
</dbReference>
<dbReference type="SUPFAM" id="SSF53448">
    <property type="entry name" value="Nucleotide-diphospho-sugar transferases"/>
    <property type="match status" value="1"/>
</dbReference>
<dbReference type="PROSITE" id="PS00014">
    <property type="entry name" value="ER_TARGET"/>
    <property type="match status" value="1"/>
</dbReference>
<reference key="1">
    <citation type="journal article" date="2009" name="PLoS Biol.">
        <title>Lineage-specific biology revealed by a finished genome assembly of the mouse.</title>
        <authorList>
            <person name="Church D.M."/>
            <person name="Goodstadt L."/>
            <person name="Hillier L.W."/>
            <person name="Zody M.C."/>
            <person name="Goldstein S."/>
            <person name="She X."/>
            <person name="Bult C.J."/>
            <person name="Agarwala R."/>
            <person name="Cherry J.L."/>
            <person name="DiCuccio M."/>
            <person name="Hlavina W."/>
            <person name="Kapustin Y."/>
            <person name="Meric P."/>
            <person name="Maglott D."/>
            <person name="Birtle Z."/>
            <person name="Marques A.C."/>
            <person name="Graves T."/>
            <person name="Zhou S."/>
            <person name="Teague B."/>
            <person name="Potamousis K."/>
            <person name="Churas C."/>
            <person name="Place M."/>
            <person name="Herschleb J."/>
            <person name="Runnheim R."/>
            <person name="Forrest D."/>
            <person name="Amos-Landgraf J."/>
            <person name="Schwartz D.C."/>
            <person name="Cheng Z."/>
            <person name="Lindblad-Toh K."/>
            <person name="Eichler E.E."/>
            <person name="Ponting C.P."/>
        </authorList>
    </citation>
    <scope>NUCLEOTIDE SEQUENCE [LARGE SCALE GENOMIC DNA]</scope>
    <source>
        <strain>C57BL/6J</strain>
    </source>
</reference>
<keyword id="KW-0130">Cell adhesion</keyword>
<keyword id="KW-0256">Endoplasmic reticulum</keyword>
<keyword id="KW-0325">Glycoprotein</keyword>
<keyword id="KW-1185">Reference proteome</keyword>
<keyword id="KW-0732">Signal</keyword>
<proteinExistence type="inferred from homology"/>
<sequence length="592" mass="67672">MHVARLLPLLLLLGQQLRAASVTEPTLPTVVLAILARNAEHSLPHYLGALERLDYPRARLALWCATDHNMDNTTGMLREWLAAVGRDYATVVWKPEEEARSYPDEQGPKHWTKERHQFLMELRQEALAFARDWGADYILFADTDNILTNNQTLKLLIDRQLPVVAPMLDSQTYYSNFWCGITPQGYYRRTAEYFPTKNRQRQGCFRVPMVHSTFLLSLQTEETARLAFYPPHPNYSWPFDDIIVFAYACQAAGVSMHVCNDHRYGYMNVVVKPHQSLEEEKTNFIHLILEALVDGPPMLASAHVSRPPKKLSKMGFDEVFVISLARRPQRRARMLSSLWEMEISAQVVDAVDGRTLNSSILKHLGVDLLPGYQDPYSGHTLTKGEVGCFLSHYSIWEEVVARGLARVVVFEDDVRFKDNFRRRLERLMEDVLIQKLSWDLIYLGRKQVNPEEEVAVEGLPGLVVAGYSYWTLAYTLSLAGARKLLASQPLHRMLPVDEFLPVMFDRHPNDQYKAYFWPRDLQAFSARPLLASPTHYSGDAEWLSDTETSSPWDDDSGRLISQTGSQKALRGPHLHLTGSSGHSLHPHHRDEL</sequence>
<feature type="signal peptide" evidence="2">
    <location>
        <begin position="1"/>
        <end position="19"/>
    </location>
</feature>
<feature type="chain" id="PRO_0000309545" description="Inactive glycosyltransferase 25 family member 3">
    <location>
        <begin position="20"/>
        <end position="592"/>
    </location>
</feature>
<feature type="region of interest" description="Disordered" evidence="4">
    <location>
        <begin position="540"/>
        <end position="592"/>
    </location>
</feature>
<feature type="short sequence motif" description="Prevents secretion from ER" evidence="3">
    <location>
        <begin position="589"/>
        <end position="592"/>
    </location>
</feature>
<feature type="glycosylation site" description="N-linked (GlcNAc...) asparagine" evidence="2">
    <location>
        <position position="72"/>
    </location>
</feature>
<feature type="glycosylation site" description="N-linked (GlcNAc...) asparagine" evidence="2">
    <location>
        <position position="150"/>
    </location>
</feature>
<feature type="glycosylation site" description="N-linked (GlcNAc...) asparagine" evidence="2">
    <location>
        <position position="234"/>
    </location>
</feature>
<feature type="glycosylation site" description="N-linked (GlcNAc...) asparagine" evidence="2">
    <location>
        <position position="357"/>
    </location>
</feature>